<protein>
    <recommendedName>
        <fullName evidence="1">Glutathione-binding protein GsiB</fullName>
    </recommendedName>
</protein>
<gene>
    <name evidence="1" type="primary">gsiB</name>
    <name type="ordered locus">SDY_0757</name>
</gene>
<reference key="1">
    <citation type="journal article" date="2005" name="Nucleic Acids Res.">
        <title>Genome dynamics and diversity of Shigella species, the etiologic agents of bacillary dysentery.</title>
        <authorList>
            <person name="Yang F."/>
            <person name="Yang J."/>
            <person name="Zhang X."/>
            <person name="Chen L."/>
            <person name="Jiang Y."/>
            <person name="Yan Y."/>
            <person name="Tang X."/>
            <person name="Wang J."/>
            <person name="Xiong Z."/>
            <person name="Dong J."/>
            <person name="Xue Y."/>
            <person name="Zhu Y."/>
            <person name="Xu X."/>
            <person name="Sun L."/>
            <person name="Chen S."/>
            <person name="Nie H."/>
            <person name="Peng J."/>
            <person name="Xu J."/>
            <person name="Wang Y."/>
            <person name="Yuan Z."/>
            <person name="Wen Y."/>
            <person name="Yao Z."/>
            <person name="Shen Y."/>
            <person name="Qiang B."/>
            <person name="Hou Y."/>
            <person name="Yu J."/>
            <person name="Jin Q."/>
        </authorList>
    </citation>
    <scope>NUCLEOTIDE SEQUENCE [LARGE SCALE GENOMIC DNA]</scope>
    <source>
        <strain>Sd197</strain>
    </source>
</reference>
<organism>
    <name type="scientific">Shigella dysenteriae serotype 1 (strain Sd197)</name>
    <dbReference type="NCBI Taxonomy" id="300267"/>
    <lineage>
        <taxon>Bacteria</taxon>
        <taxon>Pseudomonadati</taxon>
        <taxon>Pseudomonadota</taxon>
        <taxon>Gammaproteobacteria</taxon>
        <taxon>Enterobacterales</taxon>
        <taxon>Enterobacteriaceae</taxon>
        <taxon>Shigella</taxon>
    </lineage>
</organism>
<sequence>MARAVHRSGLVALGIVTALMASCAFAAKDVVVAVGSNFTTLDPYDANDTLSQAVAKSFYQGLFGLDKEMKLKNVLAESYTVSDDGITYTVKLREGIKFQDGTDFNAAAVKANLDRASDPANHLKRYNLYKNIAKTEAIDPTTVKITLKQPFSAFINILAHPATAMISPAALEKYGKEIGFHPVGTGPYELDTWNQTDFVKVKKFAGYWQPGLPKLDSITWRPVADNNTRAAMLQTGEAQFAFPIPYEQAALLEKNKNIELMASPSIMQRYISMNVTQKPFDNPKVREALNYAINRPALVKVAFAGYATPATGVVPPSIAYAQSYKPWPYDPVKARELLKEAGYPNGFSTTLWSSHNHSTAQKVLQFTQQQLAQVGIKAQVTAMDAGQRAAEVEGKGQKESGVRMFYTGWSASTGEADWALSPLFASQNWPPTLFNTAFYSNKQVDDFLAQALKTNDPAEKTSLYKAAQDIIWQESPWIPLVVEKLVSAHSKNLTGFWIMPDTGFSFEDADLQ</sequence>
<accession>Q32IB6</accession>
<evidence type="ECO:0000250" key="1">
    <source>
        <dbReference type="UniProtKB" id="P75797"/>
    </source>
</evidence>
<evidence type="ECO:0000255" key="2"/>
<evidence type="ECO:0000305" key="3"/>
<name>GSIB_SHIDS</name>
<proteinExistence type="inferred from homology"/>
<comment type="function">
    <text evidence="1">Part of the ABC transporter complex GsiABCD involved in glutathione import. Binds glutathione.</text>
</comment>
<comment type="subunit">
    <text evidence="1">The complex is composed of two ATP-binding proteins (GsiA), two transmembrane proteins (GsiC and GsiD) and a solute-binding protein (GsiB).</text>
</comment>
<comment type="subcellular location">
    <subcellularLocation>
        <location evidence="1">Periplasm</location>
    </subcellularLocation>
</comment>
<comment type="similarity">
    <text evidence="3">Belongs to the bacterial solute-binding protein 5 family.</text>
</comment>
<feature type="signal peptide" evidence="2">
    <location>
        <begin position="1"/>
        <end position="26"/>
    </location>
</feature>
<feature type="chain" id="PRO_0000279983" description="Glutathione-binding protein GsiB">
    <location>
        <begin position="27"/>
        <end position="512"/>
    </location>
</feature>
<dbReference type="EMBL" id="CP000034">
    <property type="protein sequence ID" value="ABB60941.1"/>
    <property type="molecule type" value="Genomic_DNA"/>
</dbReference>
<dbReference type="RefSeq" id="WP_000090187.1">
    <property type="nucleotide sequence ID" value="NC_007606.1"/>
</dbReference>
<dbReference type="RefSeq" id="YP_402430.1">
    <property type="nucleotide sequence ID" value="NC_007606.1"/>
</dbReference>
<dbReference type="SMR" id="Q32IB6"/>
<dbReference type="STRING" id="300267.SDY_0757"/>
<dbReference type="EnsemblBacteria" id="ABB60941">
    <property type="protein sequence ID" value="ABB60941"/>
    <property type="gene ID" value="SDY_0757"/>
</dbReference>
<dbReference type="KEGG" id="sdy:SDY_0757"/>
<dbReference type="PATRIC" id="fig|300267.13.peg.871"/>
<dbReference type="HOGENOM" id="CLU_017028_7_3_6"/>
<dbReference type="Proteomes" id="UP000002716">
    <property type="component" value="Chromosome"/>
</dbReference>
<dbReference type="GO" id="GO:0043190">
    <property type="term" value="C:ATP-binding cassette (ABC) transporter complex"/>
    <property type="evidence" value="ECO:0007669"/>
    <property type="project" value="InterPro"/>
</dbReference>
<dbReference type="GO" id="GO:0030288">
    <property type="term" value="C:outer membrane-bounded periplasmic space"/>
    <property type="evidence" value="ECO:0007669"/>
    <property type="project" value="TreeGrafter"/>
</dbReference>
<dbReference type="GO" id="GO:1904680">
    <property type="term" value="F:peptide transmembrane transporter activity"/>
    <property type="evidence" value="ECO:0007669"/>
    <property type="project" value="TreeGrafter"/>
</dbReference>
<dbReference type="GO" id="GO:0042938">
    <property type="term" value="P:dipeptide transport"/>
    <property type="evidence" value="ECO:0007669"/>
    <property type="project" value="TreeGrafter"/>
</dbReference>
<dbReference type="CDD" id="cd08499">
    <property type="entry name" value="PBP2_Ylib_like"/>
    <property type="match status" value="1"/>
</dbReference>
<dbReference type="FunFam" id="3.10.105.10:FF:000003">
    <property type="entry name" value="Glutathione ABC transporter substrate-binding protein GsiB"/>
    <property type="match status" value="1"/>
</dbReference>
<dbReference type="FunFam" id="3.40.190.10:FF:000094">
    <property type="entry name" value="Glutathione ABC transporter substrate-binding protein GsiB"/>
    <property type="match status" value="1"/>
</dbReference>
<dbReference type="FunFam" id="3.90.76.10:FF:000003">
    <property type="entry name" value="Glutathione ABC transporter substrate-binding protein GsiB"/>
    <property type="match status" value="1"/>
</dbReference>
<dbReference type="Gene3D" id="3.90.76.10">
    <property type="entry name" value="Dipeptide-binding Protein, Domain 1"/>
    <property type="match status" value="1"/>
</dbReference>
<dbReference type="Gene3D" id="3.10.105.10">
    <property type="entry name" value="Dipeptide-binding Protein, Domain 3"/>
    <property type="match status" value="1"/>
</dbReference>
<dbReference type="Gene3D" id="3.40.190.10">
    <property type="entry name" value="Periplasmic binding protein-like II"/>
    <property type="match status" value="1"/>
</dbReference>
<dbReference type="InterPro" id="IPR030678">
    <property type="entry name" value="Peptide/Ni-bd"/>
</dbReference>
<dbReference type="InterPro" id="IPR039424">
    <property type="entry name" value="SBP_5"/>
</dbReference>
<dbReference type="InterPro" id="IPR023765">
    <property type="entry name" value="SBP_5_CS"/>
</dbReference>
<dbReference type="InterPro" id="IPR000914">
    <property type="entry name" value="SBP_5_dom"/>
</dbReference>
<dbReference type="NCBIfam" id="NF011942">
    <property type="entry name" value="PRK15413.1"/>
    <property type="match status" value="1"/>
</dbReference>
<dbReference type="PANTHER" id="PTHR30290:SF32">
    <property type="entry name" value="GLUTATHIONE-BINDING PROTEIN GSIB"/>
    <property type="match status" value="1"/>
</dbReference>
<dbReference type="PANTHER" id="PTHR30290">
    <property type="entry name" value="PERIPLASMIC BINDING COMPONENT OF ABC TRANSPORTER"/>
    <property type="match status" value="1"/>
</dbReference>
<dbReference type="Pfam" id="PF00496">
    <property type="entry name" value="SBP_bac_5"/>
    <property type="match status" value="1"/>
</dbReference>
<dbReference type="PIRSF" id="PIRSF002741">
    <property type="entry name" value="MppA"/>
    <property type="match status" value="1"/>
</dbReference>
<dbReference type="SUPFAM" id="SSF53850">
    <property type="entry name" value="Periplasmic binding protein-like II"/>
    <property type="match status" value="1"/>
</dbReference>
<dbReference type="PROSITE" id="PS01040">
    <property type="entry name" value="SBP_BACTERIAL_5"/>
    <property type="match status" value="1"/>
</dbReference>
<keyword id="KW-0574">Periplasm</keyword>
<keyword id="KW-1185">Reference proteome</keyword>
<keyword id="KW-0732">Signal</keyword>
<keyword id="KW-0813">Transport</keyword>